<dbReference type="EMBL" id="AM494475">
    <property type="protein sequence ID" value="CAM79426.1"/>
    <property type="molecule type" value="Genomic_DNA"/>
</dbReference>
<dbReference type="RefSeq" id="WP_011944424.1">
    <property type="nucleotide sequence ID" value="NC_009488.1"/>
</dbReference>
<dbReference type="SMR" id="A5CCJ6"/>
<dbReference type="KEGG" id="ots:OTBS_0360"/>
<dbReference type="eggNOG" id="COG0256">
    <property type="taxonomic scope" value="Bacteria"/>
</dbReference>
<dbReference type="HOGENOM" id="CLU_098841_0_1_5"/>
<dbReference type="Proteomes" id="UP000001565">
    <property type="component" value="Chromosome"/>
</dbReference>
<dbReference type="GO" id="GO:0022625">
    <property type="term" value="C:cytosolic large ribosomal subunit"/>
    <property type="evidence" value="ECO:0007669"/>
    <property type="project" value="TreeGrafter"/>
</dbReference>
<dbReference type="GO" id="GO:0008097">
    <property type="term" value="F:5S rRNA binding"/>
    <property type="evidence" value="ECO:0007669"/>
    <property type="project" value="TreeGrafter"/>
</dbReference>
<dbReference type="GO" id="GO:0003735">
    <property type="term" value="F:structural constituent of ribosome"/>
    <property type="evidence" value="ECO:0007669"/>
    <property type="project" value="InterPro"/>
</dbReference>
<dbReference type="GO" id="GO:0006412">
    <property type="term" value="P:translation"/>
    <property type="evidence" value="ECO:0007669"/>
    <property type="project" value="UniProtKB-UniRule"/>
</dbReference>
<dbReference type="CDD" id="cd00432">
    <property type="entry name" value="Ribosomal_L18_L5e"/>
    <property type="match status" value="1"/>
</dbReference>
<dbReference type="FunFam" id="3.30.420.100:FF:000001">
    <property type="entry name" value="50S ribosomal protein L18"/>
    <property type="match status" value="1"/>
</dbReference>
<dbReference type="Gene3D" id="3.30.420.100">
    <property type="match status" value="1"/>
</dbReference>
<dbReference type="HAMAP" id="MF_01337_B">
    <property type="entry name" value="Ribosomal_uL18_B"/>
    <property type="match status" value="1"/>
</dbReference>
<dbReference type="InterPro" id="IPR004389">
    <property type="entry name" value="Ribosomal_uL18_bac-type"/>
</dbReference>
<dbReference type="InterPro" id="IPR005484">
    <property type="entry name" value="Ribosomal_uL18_bac/euk"/>
</dbReference>
<dbReference type="NCBIfam" id="TIGR00060">
    <property type="entry name" value="L18_bact"/>
    <property type="match status" value="1"/>
</dbReference>
<dbReference type="PANTHER" id="PTHR12899">
    <property type="entry name" value="39S RIBOSOMAL PROTEIN L18, MITOCHONDRIAL"/>
    <property type="match status" value="1"/>
</dbReference>
<dbReference type="PANTHER" id="PTHR12899:SF3">
    <property type="entry name" value="LARGE RIBOSOMAL SUBUNIT PROTEIN UL18M"/>
    <property type="match status" value="1"/>
</dbReference>
<dbReference type="Pfam" id="PF00861">
    <property type="entry name" value="Ribosomal_L18p"/>
    <property type="match status" value="1"/>
</dbReference>
<dbReference type="SUPFAM" id="SSF53137">
    <property type="entry name" value="Translational machinery components"/>
    <property type="match status" value="1"/>
</dbReference>
<protein>
    <recommendedName>
        <fullName evidence="1">Large ribosomal subunit protein uL18</fullName>
    </recommendedName>
    <alternativeName>
        <fullName evidence="2">50S ribosomal protein L18</fullName>
    </alternativeName>
</protein>
<organism>
    <name type="scientific">Orientia tsutsugamushi (strain Boryong)</name>
    <name type="common">Rickettsia tsutsugamushi</name>
    <dbReference type="NCBI Taxonomy" id="357244"/>
    <lineage>
        <taxon>Bacteria</taxon>
        <taxon>Pseudomonadati</taxon>
        <taxon>Pseudomonadota</taxon>
        <taxon>Alphaproteobacteria</taxon>
        <taxon>Rickettsiales</taxon>
        <taxon>Rickettsiaceae</taxon>
        <taxon>Rickettsieae</taxon>
        <taxon>Orientia</taxon>
    </lineage>
</organism>
<reference key="1">
    <citation type="journal article" date="2007" name="Proc. Natl. Acad. Sci. U.S.A.">
        <title>The Orientia tsutsugamushi genome reveals massive proliferation of conjugative type IV secretion system and host-cell interaction genes.</title>
        <authorList>
            <person name="Cho N.-H."/>
            <person name="Kim H.-R."/>
            <person name="Lee J.-H."/>
            <person name="Kim S.-Y."/>
            <person name="Kim J."/>
            <person name="Cha S."/>
            <person name="Kim S.-Y."/>
            <person name="Darby A.C."/>
            <person name="Fuxelius H.-H."/>
            <person name="Yin J."/>
            <person name="Kim J.H."/>
            <person name="Kim J."/>
            <person name="Lee S.J."/>
            <person name="Koh Y.-S."/>
            <person name="Jang W.-J."/>
            <person name="Park K.-H."/>
            <person name="Andersson S.G.E."/>
            <person name="Choi M.-S."/>
            <person name="Kim I.-S."/>
        </authorList>
    </citation>
    <scope>NUCLEOTIDE SEQUENCE [LARGE SCALE GENOMIC DNA]</scope>
    <source>
        <strain>Boryong</strain>
    </source>
</reference>
<sequence length="124" mass="13966">MRDSKDRFIIRKNRVRAKIAKLSGGCYPRLSVFKSNRHIYAQVIENIGSNKSNTIAAASTLDKDIFTESKYYKCNIQYAKKVGQLLAERANSKGITSVVFDRGGYKYHGVIKALADGAREKLNF</sequence>
<keyword id="KW-1185">Reference proteome</keyword>
<keyword id="KW-0687">Ribonucleoprotein</keyword>
<keyword id="KW-0689">Ribosomal protein</keyword>
<keyword id="KW-0694">RNA-binding</keyword>
<keyword id="KW-0699">rRNA-binding</keyword>
<proteinExistence type="inferred from homology"/>
<feature type="chain" id="PRO_1000053072" description="Large ribosomal subunit protein uL18">
    <location>
        <begin position="1"/>
        <end position="124"/>
    </location>
</feature>
<evidence type="ECO:0000255" key="1">
    <source>
        <dbReference type="HAMAP-Rule" id="MF_01337"/>
    </source>
</evidence>
<evidence type="ECO:0000305" key="2"/>
<accession>A5CCJ6</accession>
<gene>
    <name evidence="1" type="primary">rplR</name>
    <name type="ordered locus">OTBS_0360</name>
</gene>
<comment type="function">
    <text evidence="1">This is one of the proteins that bind and probably mediate the attachment of the 5S RNA into the large ribosomal subunit, where it forms part of the central protuberance.</text>
</comment>
<comment type="subunit">
    <text evidence="1">Part of the 50S ribosomal subunit; part of the 5S rRNA/L5/L18/L25 subcomplex. Contacts the 5S and 23S rRNAs.</text>
</comment>
<comment type="similarity">
    <text evidence="1">Belongs to the universal ribosomal protein uL18 family.</text>
</comment>
<name>RL18_ORITB</name>